<reference key="1">
    <citation type="journal article" date="2006" name="Mol. Microbiol.">
        <title>Role of pathogenicity island-associated integrases in the genome plasticity of uropathogenic Escherichia coli strain 536.</title>
        <authorList>
            <person name="Hochhut B."/>
            <person name="Wilde C."/>
            <person name="Balling G."/>
            <person name="Middendorf B."/>
            <person name="Dobrindt U."/>
            <person name="Brzuszkiewicz E."/>
            <person name="Gottschalk G."/>
            <person name="Carniel E."/>
            <person name="Hacker J."/>
        </authorList>
    </citation>
    <scope>NUCLEOTIDE SEQUENCE [LARGE SCALE GENOMIC DNA]</scope>
    <source>
        <strain>536 / UPEC</strain>
    </source>
</reference>
<dbReference type="EMBL" id="CP000247">
    <property type="protein sequence ID" value="ABG71375.1"/>
    <property type="molecule type" value="Genomic_DNA"/>
</dbReference>
<dbReference type="RefSeq" id="WP_001118930.1">
    <property type="nucleotide sequence ID" value="NC_008253.1"/>
</dbReference>
<dbReference type="SMR" id="Q0TCF4"/>
<dbReference type="GeneID" id="93778680"/>
<dbReference type="KEGG" id="ecp:ECP_3395"/>
<dbReference type="HOGENOM" id="CLU_139869_0_1_6"/>
<dbReference type="Proteomes" id="UP000009182">
    <property type="component" value="Chromosome"/>
</dbReference>
<dbReference type="GO" id="GO:0005737">
    <property type="term" value="C:cytoplasm"/>
    <property type="evidence" value="ECO:0007669"/>
    <property type="project" value="UniProtKB-ARBA"/>
</dbReference>
<dbReference type="GO" id="GO:0015935">
    <property type="term" value="C:small ribosomal subunit"/>
    <property type="evidence" value="ECO:0007669"/>
    <property type="project" value="TreeGrafter"/>
</dbReference>
<dbReference type="GO" id="GO:0019843">
    <property type="term" value="F:rRNA binding"/>
    <property type="evidence" value="ECO:0007669"/>
    <property type="project" value="UniProtKB-UniRule"/>
</dbReference>
<dbReference type="GO" id="GO:0003735">
    <property type="term" value="F:structural constituent of ribosome"/>
    <property type="evidence" value="ECO:0007669"/>
    <property type="project" value="InterPro"/>
</dbReference>
<dbReference type="GO" id="GO:0006412">
    <property type="term" value="P:translation"/>
    <property type="evidence" value="ECO:0007669"/>
    <property type="project" value="UniProtKB-UniRule"/>
</dbReference>
<dbReference type="FunFam" id="1.10.287.1480:FF:000001">
    <property type="entry name" value="30S ribosomal protein S14"/>
    <property type="match status" value="1"/>
</dbReference>
<dbReference type="Gene3D" id="1.10.287.1480">
    <property type="match status" value="1"/>
</dbReference>
<dbReference type="HAMAP" id="MF_00537">
    <property type="entry name" value="Ribosomal_uS14_1"/>
    <property type="match status" value="1"/>
</dbReference>
<dbReference type="InterPro" id="IPR001209">
    <property type="entry name" value="Ribosomal_uS14"/>
</dbReference>
<dbReference type="InterPro" id="IPR023036">
    <property type="entry name" value="Ribosomal_uS14_bac/plastid"/>
</dbReference>
<dbReference type="InterPro" id="IPR018271">
    <property type="entry name" value="Ribosomal_uS14_CS"/>
</dbReference>
<dbReference type="NCBIfam" id="NF006477">
    <property type="entry name" value="PRK08881.1"/>
    <property type="match status" value="1"/>
</dbReference>
<dbReference type="PANTHER" id="PTHR19836">
    <property type="entry name" value="30S RIBOSOMAL PROTEIN S14"/>
    <property type="match status" value="1"/>
</dbReference>
<dbReference type="PANTHER" id="PTHR19836:SF19">
    <property type="entry name" value="SMALL RIBOSOMAL SUBUNIT PROTEIN US14M"/>
    <property type="match status" value="1"/>
</dbReference>
<dbReference type="Pfam" id="PF00253">
    <property type="entry name" value="Ribosomal_S14"/>
    <property type="match status" value="1"/>
</dbReference>
<dbReference type="SUPFAM" id="SSF57716">
    <property type="entry name" value="Glucocorticoid receptor-like (DNA-binding domain)"/>
    <property type="match status" value="1"/>
</dbReference>
<dbReference type="PROSITE" id="PS00527">
    <property type="entry name" value="RIBOSOMAL_S14"/>
    <property type="match status" value="1"/>
</dbReference>
<proteinExistence type="inferred from homology"/>
<sequence length="101" mass="11580">MAKQSMKAREVKRVALADKYFAKRAELKAIISDVNASDEDRWNAVLKLQTLPRDSSPSRQRNRCRQTGRPHGFLRKFGLSRIKVREAAMRGEIPGLKKASW</sequence>
<protein>
    <recommendedName>
        <fullName evidence="1">Small ribosomal subunit protein uS14</fullName>
    </recommendedName>
    <alternativeName>
        <fullName evidence="2">30S ribosomal protein S14</fullName>
    </alternativeName>
</protein>
<name>RS14_ECOL5</name>
<comment type="function">
    <text evidence="1">Binds 16S rRNA, required for the assembly of 30S particles and may also be responsible for determining the conformation of the 16S rRNA at the A site.</text>
</comment>
<comment type="subunit">
    <text evidence="1">Part of the 30S ribosomal subunit. Contacts proteins S3 and S10.</text>
</comment>
<comment type="similarity">
    <text evidence="1">Belongs to the universal ribosomal protein uS14 family.</text>
</comment>
<feature type="chain" id="PRO_1000128389" description="Small ribosomal subunit protein uS14">
    <location>
        <begin position="1"/>
        <end position="101"/>
    </location>
</feature>
<gene>
    <name evidence="1" type="primary">rpsN</name>
    <name type="ordered locus">ECP_3395</name>
</gene>
<organism>
    <name type="scientific">Escherichia coli O6:K15:H31 (strain 536 / UPEC)</name>
    <dbReference type="NCBI Taxonomy" id="362663"/>
    <lineage>
        <taxon>Bacteria</taxon>
        <taxon>Pseudomonadati</taxon>
        <taxon>Pseudomonadota</taxon>
        <taxon>Gammaproteobacteria</taxon>
        <taxon>Enterobacterales</taxon>
        <taxon>Enterobacteriaceae</taxon>
        <taxon>Escherichia</taxon>
    </lineage>
</organism>
<evidence type="ECO:0000255" key="1">
    <source>
        <dbReference type="HAMAP-Rule" id="MF_00537"/>
    </source>
</evidence>
<evidence type="ECO:0000305" key="2"/>
<accession>Q0TCF4</accession>
<keyword id="KW-0687">Ribonucleoprotein</keyword>
<keyword id="KW-0689">Ribosomal protein</keyword>
<keyword id="KW-0694">RNA-binding</keyword>
<keyword id="KW-0699">rRNA-binding</keyword>